<reference key="1">
    <citation type="journal article" date="2007" name="Microbiology">
        <title>Comparative analysis of the Corynebacterium glutamicum group and complete genome sequence of strain R.</title>
        <authorList>
            <person name="Yukawa H."/>
            <person name="Omumasaba C.A."/>
            <person name="Nonaka H."/>
            <person name="Kos P."/>
            <person name="Okai N."/>
            <person name="Suzuki N."/>
            <person name="Suda M."/>
            <person name="Tsuge Y."/>
            <person name="Watanabe J."/>
            <person name="Ikeda Y."/>
            <person name="Vertes A.A."/>
            <person name="Inui M."/>
        </authorList>
    </citation>
    <scope>NUCLEOTIDE SEQUENCE [LARGE SCALE GENOMIC DNA]</scope>
    <source>
        <strain>R</strain>
    </source>
</reference>
<keyword id="KW-0687">Ribonucleoprotein</keyword>
<keyword id="KW-0689">Ribosomal protein</keyword>
<accession>A4QBH7</accession>
<comment type="function">
    <text evidence="1">Involved in the binding of tRNA to the ribosomes.</text>
</comment>
<comment type="subunit">
    <text evidence="1">Part of the 30S ribosomal subunit.</text>
</comment>
<comment type="similarity">
    <text evidence="1">Belongs to the universal ribosomal protein uS10 family.</text>
</comment>
<evidence type="ECO:0000255" key="1">
    <source>
        <dbReference type="HAMAP-Rule" id="MF_00508"/>
    </source>
</evidence>
<evidence type="ECO:0000305" key="2"/>
<name>RS10_CORGB</name>
<protein>
    <recommendedName>
        <fullName evidence="1">Small ribosomal subunit protein uS10</fullName>
    </recommendedName>
    <alternativeName>
        <fullName evidence="2">30S ribosomal protein S10</fullName>
    </alternativeName>
</protein>
<sequence>MAGQKIRIRLKAYDHEAIDASARKIVETVTRTGARVVGPVPLPTEKNVYAVIRSPHKYKDSREHFEMRTHKRLIDILDPTPKTVDALMRIDLPASVDVNIQ</sequence>
<proteinExistence type="inferred from homology"/>
<organism>
    <name type="scientific">Corynebacterium glutamicum (strain R)</name>
    <dbReference type="NCBI Taxonomy" id="340322"/>
    <lineage>
        <taxon>Bacteria</taxon>
        <taxon>Bacillati</taxon>
        <taxon>Actinomycetota</taxon>
        <taxon>Actinomycetes</taxon>
        <taxon>Mycobacteriales</taxon>
        <taxon>Corynebacteriaceae</taxon>
        <taxon>Corynebacterium</taxon>
    </lineage>
</organism>
<dbReference type="EMBL" id="AP009044">
    <property type="protein sequence ID" value="BAF53574.1"/>
    <property type="molecule type" value="Genomic_DNA"/>
</dbReference>
<dbReference type="RefSeq" id="WP_003854291.1">
    <property type="nucleotide sequence ID" value="NC_009342.1"/>
</dbReference>
<dbReference type="SMR" id="A4QBH7"/>
<dbReference type="GeneID" id="93973422"/>
<dbReference type="KEGG" id="cgt:cgR_0605"/>
<dbReference type="HOGENOM" id="CLU_122625_1_3_11"/>
<dbReference type="PhylomeDB" id="A4QBH7"/>
<dbReference type="Proteomes" id="UP000006698">
    <property type="component" value="Chromosome"/>
</dbReference>
<dbReference type="GO" id="GO:1990904">
    <property type="term" value="C:ribonucleoprotein complex"/>
    <property type="evidence" value="ECO:0007669"/>
    <property type="project" value="UniProtKB-KW"/>
</dbReference>
<dbReference type="GO" id="GO:0005840">
    <property type="term" value="C:ribosome"/>
    <property type="evidence" value="ECO:0007669"/>
    <property type="project" value="UniProtKB-KW"/>
</dbReference>
<dbReference type="GO" id="GO:0003735">
    <property type="term" value="F:structural constituent of ribosome"/>
    <property type="evidence" value="ECO:0007669"/>
    <property type="project" value="InterPro"/>
</dbReference>
<dbReference type="GO" id="GO:0000049">
    <property type="term" value="F:tRNA binding"/>
    <property type="evidence" value="ECO:0007669"/>
    <property type="project" value="UniProtKB-UniRule"/>
</dbReference>
<dbReference type="GO" id="GO:0006412">
    <property type="term" value="P:translation"/>
    <property type="evidence" value="ECO:0007669"/>
    <property type="project" value="UniProtKB-UniRule"/>
</dbReference>
<dbReference type="FunFam" id="3.30.70.600:FF:000001">
    <property type="entry name" value="30S ribosomal protein S10"/>
    <property type="match status" value="1"/>
</dbReference>
<dbReference type="Gene3D" id="3.30.70.600">
    <property type="entry name" value="Ribosomal protein S10 domain"/>
    <property type="match status" value="1"/>
</dbReference>
<dbReference type="HAMAP" id="MF_00508">
    <property type="entry name" value="Ribosomal_uS10"/>
    <property type="match status" value="1"/>
</dbReference>
<dbReference type="InterPro" id="IPR001848">
    <property type="entry name" value="Ribosomal_uS10"/>
</dbReference>
<dbReference type="InterPro" id="IPR018268">
    <property type="entry name" value="Ribosomal_uS10_CS"/>
</dbReference>
<dbReference type="InterPro" id="IPR027486">
    <property type="entry name" value="Ribosomal_uS10_dom"/>
</dbReference>
<dbReference type="InterPro" id="IPR036838">
    <property type="entry name" value="Ribosomal_uS10_dom_sf"/>
</dbReference>
<dbReference type="NCBIfam" id="NF001861">
    <property type="entry name" value="PRK00596.1"/>
    <property type="match status" value="1"/>
</dbReference>
<dbReference type="NCBIfam" id="TIGR01049">
    <property type="entry name" value="rpsJ_bact"/>
    <property type="match status" value="1"/>
</dbReference>
<dbReference type="PANTHER" id="PTHR11700">
    <property type="entry name" value="30S RIBOSOMAL PROTEIN S10 FAMILY MEMBER"/>
    <property type="match status" value="1"/>
</dbReference>
<dbReference type="Pfam" id="PF00338">
    <property type="entry name" value="Ribosomal_S10"/>
    <property type="match status" value="1"/>
</dbReference>
<dbReference type="PRINTS" id="PR00971">
    <property type="entry name" value="RIBOSOMALS10"/>
</dbReference>
<dbReference type="SMART" id="SM01403">
    <property type="entry name" value="Ribosomal_S10"/>
    <property type="match status" value="1"/>
</dbReference>
<dbReference type="SUPFAM" id="SSF54999">
    <property type="entry name" value="Ribosomal protein S10"/>
    <property type="match status" value="1"/>
</dbReference>
<dbReference type="PROSITE" id="PS00361">
    <property type="entry name" value="RIBOSOMAL_S10"/>
    <property type="match status" value="1"/>
</dbReference>
<feature type="chain" id="PRO_1000015016" description="Small ribosomal subunit protein uS10">
    <location>
        <begin position="1"/>
        <end position="101"/>
    </location>
</feature>
<gene>
    <name evidence="1" type="primary">rpsJ</name>
    <name type="ordered locus">cgR_0605</name>
</gene>